<gene>
    <name type="ORF">DDB_G0289955</name>
</gene>
<keyword id="KW-1185">Reference proteome</keyword>
<evidence type="ECO:0000256" key="1">
    <source>
        <dbReference type="SAM" id="MobiDB-lite"/>
    </source>
</evidence>
<name>Y8668_DICDI</name>
<sequence length="197" mass="22131">MSDDLNDFFAKKDSTKKVVKKPTSTTPKVVVKPVSPTTPVVSPTTVTSPVSPTTPVVEPKKVVDLSQLNKSKDTTPVVDVKESKTEQINIPTMRWADKNEQTTTTTQTKVYKNYPSLKKEETKVDEDDDQIYEDKEEEKEVKKDEENSTADEEPVKKSNKKVAPKQKKKSKQELEAEALMASLGIIDEKPVPKQKKK</sequence>
<accession>Q54GR3</accession>
<proteinExistence type="predicted"/>
<organism>
    <name type="scientific">Dictyostelium discoideum</name>
    <name type="common">Social amoeba</name>
    <dbReference type="NCBI Taxonomy" id="44689"/>
    <lineage>
        <taxon>Eukaryota</taxon>
        <taxon>Amoebozoa</taxon>
        <taxon>Evosea</taxon>
        <taxon>Eumycetozoa</taxon>
        <taxon>Dictyostelia</taxon>
        <taxon>Dictyosteliales</taxon>
        <taxon>Dictyosteliaceae</taxon>
        <taxon>Dictyostelium</taxon>
    </lineage>
</organism>
<dbReference type="EMBL" id="AAFI02000149">
    <property type="protein sequence ID" value="EAL62490.1"/>
    <property type="molecule type" value="Genomic_DNA"/>
</dbReference>
<dbReference type="RefSeq" id="XP_636006.1">
    <property type="nucleotide sequence ID" value="XM_630914.1"/>
</dbReference>
<dbReference type="SMR" id="Q54GR3"/>
<dbReference type="FunCoup" id="Q54GR3">
    <property type="interactions" value="744"/>
</dbReference>
<dbReference type="STRING" id="44689.Q54GR3"/>
<dbReference type="GlyGen" id="Q54GR3">
    <property type="glycosylation" value="2 sites"/>
</dbReference>
<dbReference type="PaxDb" id="44689-DDB0188668"/>
<dbReference type="EnsemblProtists" id="EAL62490">
    <property type="protein sequence ID" value="EAL62490"/>
    <property type="gene ID" value="DDB_G0289955"/>
</dbReference>
<dbReference type="GeneID" id="8627421"/>
<dbReference type="KEGG" id="ddi:DDB_G0289955"/>
<dbReference type="dictyBase" id="DDB_G0289955"/>
<dbReference type="VEuPathDB" id="AmoebaDB:DDB_G0289955"/>
<dbReference type="eggNOG" id="ENOG502RI4E">
    <property type="taxonomic scope" value="Eukaryota"/>
</dbReference>
<dbReference type="HOGENOM" id="CLU_1386433_0_0_1"/>
<dbReference type="InParanoid" id="Q54GR3"/>
<dbReference type="OMA" id="MRWADKN"/>
<dbReference type="PRO" id="PR:Q54GR3"/>
<dbReference type="Proteomes" id="UP000002195">
    <property type="component" value="Chromosome 5"/>
</dbReference>
<reference key="1">
    <citation type="journal article" date="2005" name="Nature">
        <title>The genome of the social amoeba Dictyostelium discoideum.</title>
        <authorList>
            <person name="Eichinger L."/>
            <person name="Pachebat J.A."/>
            <person name="Gloeckner G."/>
            <person name="Rajandream M.A."/>
            <person name="Sucgang R."/>
            <person name="Berriman M."/>
            <person name="Song J."/>
            <person name="Olsen R."/>
            <person name="Szafranski K."/>
            <person name="Xu Q."/>
            <person name="Tunggal B."/>
            <person name="Kummerfeld S."/>
            <person name="Madera M."/>
            <person name="Konfortov B.A."/>
            <person name="Rivero F."/>
            <person name="Bankier A.T."/>
            <person name="Lehmann R."/>
            <person name="Hamlin N."/>
            <person name="Davies R."/>
            <person name="Gaudet P."/>
            <person name="Fey P."/>
            <person name="Pilcher K."/>
            <person name="Chen G."/>
            <person name="Saunders D."/>
            <person name="Sodergren E.J."/>
            <person name="Davis P."/>
            <person name="Kerhornou A."/>
            <person name="Nie X."/>
            <person name="Hall N."/>
            <person name="Anjard C."/>
            <person name="Hemphill L."/>
            <person name="Bason N."/>
            <person name="Farbrother P."/>
            <person name="Desany B."/>
            <person name="Just E."/>
            <person name="Morio T."/>
            <person name="Rost R."/>
            <person name="Churcher C.M."/>
            <person name="Cooper J."/>
            <person name="Haydock S."/>
            <person name="van Driessche N."/>
            <person name="Cronin A."/>
            <person name="Goodhead I."/>
            <person name="Muzny D.M."/>
            <person name="Mourier T."/>
            <person name="Pain A."/>
            <person name="Lu M."/>
            <person name="Harper D."/>
            <person name="Lindsay R."/>
            <person name="Hauser H."/>
            <person name="James K.D."/>
            <person name="Quiles M."/>
            <person name="Madan Babu M."/>
            <person name="Saito T."/>
            <person name="Buchrieser C."/>
            <person name="Wardroper A."/>
            <person name="Felder M."/>
            <person name="Thangavelu M."/>
            <person name="Johnson D."/>
            <person name="Knights A."/>
            <person name="Loulseged H."/>
            <person name="Mungall K.L."/>
            <person name="Oliver K."/>
            <person name="Price C."/>
            <person name="Quail M.A."/>
            <person name="Urushihara H."/>
            <person name="Hernandez J."/>
            <person name="Rabbinowitsch E."/>
            <person name="Steffen D."/>
            <person name="Sanders M."/>
            <person name="Ma J."/>
            <person name="Kohara Y."/>
            <person name="Sharp S."/>
            <person name="Simmonds M.N."/>
            <person name="Spiegler S."/>
            <person name="Tivey A."/>
            <person name="Sugano S."/>
            <person name="White B."/>
            <person name="Walker D."/>
            <person name="Woodward J.R."/>
            <person name="Winckler T."/>
            <person name="Tanaka Y."/>
            <person name="Shaulsky G."/>
            <person name="Schleicher M."/>
            <person name="Weinstock G.M."/>
            <person name="Rosenthal A."/>
            <person name="Cox E.C."/>
            <person name="Chisholm R.L."/>
            <person name="Gibbs R.A."/>
            <person name="Loomis W.F."/>
            <person name="Platzer M."/>
            <person name="Kay R.R."/>
            <person name="Williams J.G."/>
            <person name="Dear P.H."/>
            <person name="Noegel A.A."/>
            <person name="Barrell B.G."/>
            <person name="Kuspa A."/>
        </authorList>
    </citation>
    <scope>NUCLEOTIDE SEQUENCE [LARGE SCALE GENOMIC DNA]</scope>
    <source>
        <strain>AX4</strain>
    </source>
</reference>
<feature type="chain" id="PRO_0000346934" description="Uncharacterized protein DDB_G0289955">
    <location>
        <begin position="1"/>
        <end position="197"/>
    </location>
</feature>
<feature type="region of interest" description="Disordered" evidence="1">
    <location>
        <begin position="1"/>
        <end position="30"/>
    </location>
</feature>
<feature type="region of interest" description="Disordered" evidence="1">
    <location>
        <begin position="115"/>
        <end position="174"/>
    </location>
</feature>
<feature type="compositionally biased region" description="Low complexity" evidence="1">
    <location>
        <begin position="21"/>
        <end position="30"/>
    </location>
</feature>
<feature type="compositionally biased region" description="Acidic residues" evidence="1">
    <location>
        <begin position="123"/>
        <end position="137"/>
    </location>
</feature>
<feature type="compositionally biased region" description="Basic residues" evidence="1">
    <location>
        <begin position="157"/>
        <end position="170"/>
    </location>
</feature>
<protein>
    <recommendedName>
        <fullName>Uncharacterized protein DDB_G0289955</fullName>
    </recommendedName>
</protein>